<dbReference type="EMBL" id="AF076983">
    <property type="protein sequence ID" value="AAC36331.1"/>
    <property type="molecule type" value="Genomic_DNA"/>
</dbReference>
<dbReference type="EMBL" id="CP001340">
    <property type="protein sequence ID" value="ACL95501.1"/>
    <property type="molecule type" value="Genomic_DNA"/>
</dbReference>
<dbReference type="RefSeq" id="WP_010919825.1">
    <property type="nucleotide sequence ID" value="NC_011916.1"/>
</dbReference>
<dbReference type="RefSeq" id="YP_002517409.1">
    <property type="nucleotide sequence ID" value="NC_011916.1"/>
</dbReference>
<dbReference type="SMR" id="B8GX11"/>
<dbReference type="GeneID" id="7333367"/>
<dbReference type="KEGG" id="ccs:CCNA_02036"/>
<dbReference type="PATRIC" id="fig|565050.3.peg.1994"/>
<dbReference type="HOGENOM" id="CLU_105066_3_3_5"/>
<dbReference type="OrthoDB" id="9804203at2"/>
<dbReference type="PhylomeDB" id="B8GX11"/>
<dbReference type="Proteomes" id="UP000001364">
    <property type="component" value="Chromosome"/>
</dbReference>
<dbReference type="GO" id="GO:0005829">
    <property type="term" value="C:cytosol"/>
    <property type="evidence" value="ECO:0007669"/>
    <property type="project" value="TreeGrafter"/>
</dbReference>
<dbReference type="GO" id="GO:0003677">
    <property type="term" value="F:DNA binding"/>
    <property type="evidence" value="ECO:0007669"/>
    <property type="project" value="UniProtKB-KW"/>
</dbReference>
<dbReference type="GO" id="GO:0030527">
    <property type="term" value="F:structural constituent of chromatin"/>
    <property type="evidence" value="ECO:0007669"/>
    <property type="project" value="InterPro"/>
</dbReference>
<dbReference type="GO" id="GO:0030261">
    <property type="term" value="P:chromosome condensation"/>
    <property type="evidence" value="ECO:0007669"/>
    <property type="project" value="UniProtKB-KW"/>
</dbReference>
<dbReference type="CDD" id="cd13831">
    <property type="entry name" value="HU"/>
    <property type="match status" value="1"/>
</dbReference>
<dbReference type="Gene3D" id="4.10.520.10">
    <property type="entry name" value="IHF-like DNA-binding proteins"/>
    <property type="match status" value="1"/>
</dbReference>
<dbReference type="InterPro" id="IPR000119">
    <property type="entry name" value="Hist_DNA-bd"/>
</dbReference>
<dbReference type="InterPro" id="IPR010992">
    <property type="entry name" value="IHF-like_DNA-bd_dom_sf"/>
</dbReference>
<dbReference type="PANTHER" id="PTHR33175">
    <property type="entry name" value="DNA-BINDING PROTEIN HU"/>
    <property type="match status" value="1"/>
</dbReference>
<dbReference type="PANTHER" id="PTHR33175:SF3">
    <property type="entry name" value="DNA-BINDING PROTEIN HU-BETA"/>
    <property type="match status" value="1"/>
</dbReference>
<dbReference type="Pfam" id="PF00216">
    <property type="entry name" value="Bac_DNA_binding"/>
    <property type="match status" value="1"/>
</dbReference>
<dbReference type="PRINTS" id="PR01727">
    <property type="entry name" value="DNABINDINGHU"/>
</dbReference>
<dbReference type="SMART" id="SM00411">
    <property type="entry name" value="BHL"/>
    <property type="match status" value="1"/>
</dbReference>
<dbReference type="SUPFAM" id="SSF47729">
    <property type="entry name" value="IHF-like DNA-binding proteins"/>
    <property type="match status" value="1"/>
</dbReference>
<proteinExistence type="inferred from homology"/>
<accession>B8GX11</accession>
<accession>O87475</accession>
<keyword id="KW-0226">DNA condensation</keyword>
<keyword id="KW-0238">DNA-binding</keyword>
<keyword id="KW-1185">Reference proteome</keyword>
<gene>
    <name type="primary">hup</name>
    <name type="ordered locus">CCNA_02036</name>
</gene>
<protein>
    <recommendedName>
        <fullName>DNA-binding protein HU</fullName>
    </recommendedName>
</protein>
<reference key="1">
    <citation type="submission" date="1998-07" db="EMBL/GenBank/DDBJ databases">
        <authorList>
            <person name="England J.E."/>
            <person name="Gober J.W."/>
        </authorList>
    </citation>
    <scope>NUCLEOTIDE SEQUENCE [GENOMIC DNA]</scope>
</reference>
<reference key="2">
    <citation type="journal article" date="2010" name="J. Bacteriol.">
        <title>The genetic basis of laboratory adaptation in Caulobacter crescentus.</title>
        <authorList>
            <person name="Marks M.E."/>
            <person name="Castro-Rojas C.M."/>
            <person name="Teiling C."/>
            <person name="Du L."/>
            <person name="Kapatral V."/>
            <person name="Walunas T.L."/>
            <person name="Crosson S."/>
        </authorList>
    </citation>
    <scope>NUCLEOTIDE SEQUENCE [LARGE SCALE GENOMIC DNA]</scope>
    <source>
        <strain>NA1000 / CB15N</strain>
    </source>
</reference>
<name>DBH_CAUVN</name>
<feature type="chain" id="PRO_0000378293" description="DNA-binding protein HU">
    <location>
        <begin position="1"/>
        <end position="92"/>
    </location>
</feature>
<feature type="region of interest" description="Disordered" evidence="2">
    <location>
        <begin position="58"/>
        <end position="92"/>
    </location>
</feature>
<feature type="sequence conflict" description="In Ref. 1; AAC36331." evidence="3" ref="1">
    <original>K</original>
    <variation>N</variation>
    <location>
        <position position="76"/>
    </location>
</feature>
<comment type="function">
    <text evidence="1">Histone-like DNA-binding protein which is capable of wrapping DNA to stabilize it, and thus to prevent its denaturation under extreme environmental conditions.</text>
</comment>
<comment type="subunit">
    <text evidence="1">Homodimer.</text>
</comment>
<comment type="similarity">
    <text evidence="3">Belongs to the bacterial histone-like protein family.</text>
</comment>
<sequence>MTTKAELVTAIAEKAGINKNQAKDALEAFIEAVTDSLKSGQDVRLVGFGTFKAVTRAAGTARNPRTGETVNRPASKTARFQVGEGLKSSLNS</sequence>
<organism>
    <name type="scientific">Caulobacter vibrioides (strain NA1000 / CB15N)</name>
    <name type="common">Caulobacter crescentus</name>
    <dbReference type="NCBI Taxonomy" id="565050"/>
    <lineage>
        <taxon>Bacteria</taxon>
        <taxon>Pseudomonadati</taxon>
        <taxon>Pseudomonadota</taxon>
        <taxon>Alphaproteobacteria</taxon>
        <taxon>Caulobacterales</taxon>
        <taxon>Caulobacteraceae</taxon>
        <taxon>Caulobacter</taxon>
    </lineage>
</organism>
<evidence type="ECO:0000250" key="1"/>
<evidence type="ECO:0000256" key="2">
    <source>
        <dbReference type="SAM" id="MobiDB-lite"/>
    </source>
</evidence>
<evidence type="ECO:0000305" key="3"/>